<dbReference type="EMBL" id="KT377423">
    <property type="protein sequence ID" value="AME17687.1"/>
    <property type="molecule type" value="mRNA"/>
</dbReference>
<dbReference type="GO" id="GO:0005576">
    <property type="term" value="C:extracellular region"/>
    <property type="evidence" value="ECO:0007669"/>
    <property type="project" value="UniProtKB-SubCell"/>
</dbReference>
<dbReference type="GO" id="GO:0090729">
    <property type="term" value="F:toxin activity"/>
    <property type="evidence" value="ECO:0007669"/>
    <property type="project" value="UniProtKB-KW"/>
</dbReference>
<organism>
    <name type="scientific">Conus imperialis</name>
    <name type="common">Imperial cone</name>
    <dbReference type="NCBI Taxonomy" id="35631"/>
    <lineage>
        <taxon>Eukaryota</taxon>
        <taxon>Metazoa</taxon>
        <taxon>Spiralia</taxon>
        <taxon>Lophotrochozoa</taxon>
        <taxon>Mollusca</taxon>
        <taxon>Gastropoda</taxon>
        <taxon>Caenogastropoda</taxon>
        <taxon>Neogastropoda</taxon>
        <taxon>Conoidea</taxon>
        <taxon>Conidae</taxon>
        <taxon>Conus</taxon>
        <taxon>Stephanoconus</taxon>
    </lineage>
</organism>
<keyword id="KW-0165">Cleavage on pair of basic residues</keyword>
<keyword id="KW-1015">Disulfide bond</keyword>
<keyword id="KW-0960">Knottin</keyword>
<keyword id="KW-0528">Neurotoxin</keyword>
<keyword id="KW-0964">Secreted</keyword>
<keyword id="KW-0732">Signal</keyword>
<keyword id="KW-0800">Toxin</keyword>
<protein>
    <recommendedName>
        <fullName evidence="4">Conotoxin Im6.10</fullName>
    </recommendedName>
    <alternativeName>
        <fullName evidence="3 6">Conopeptide im029</fullName>
    </alternativeName>
</protein>
<comment type="function">
    <text evidence="4">Probable neurotoxin.</text>
</comment>
<comment type="subcellular location">
    <subcellularLocation>
        <location evidence="2">Secreted</location>
    </subcellularLocation>
</comment>
<comment type="tissue specificity">
    <text evidence="5">Expressed by the venom duct.</text>
</comment>
<comment type="domain">
    <text evidence="4">The presence of a 'disulfide through disulfide knot' structurally defines this protein as a knottin.</text>
</comment>
<comment type="domain">
    <text evidence="4">The cysteine framework is VI/VII (C-C-CC-C-C).</text>
</comment>
<proteinExistence type="evidence at protein level"/>
<reference key="1">
    <citation type="journal article" date="2019" name="Mar. Drugs">
        <title>Transcriptomic-proteomic correlation in the predation-evoked venom of the cone snail, Conus imperialis.</title>
        <authorList>
            <person name="Jin A.H."/>
            <person name="Dutertre S."/>
            <person name="Dutt M."/>
            <person name="Lavergne V."/>
            <person name="Jones A."/>
            <person name="Lewis R.J."/>
            <person name="Alewood P.F."/>
        </authorList>
    </citation>
    <scope>NUCLEOTIDE SEQUENCE [MRNA]</scope>
    <scope>IDENTIFICATION BY MASS SPECTROMETRY</scope>
    <scope>SUBCELLULAR LOCATION</scope>
    <source>
        <tissue>Venom</tissue>
        <tissue>Venom duct</tissue>
    </source>
</reference>
<evidence type="ECO:0000255" key="1"/>
<evidence type="ECO:0000269" key="2">
    <source>
    </source>
</evidence>
<evidence type="ECO:0000303" key="3">
    <source>
    </source>
</evidence>
<evidence type="ECO:0000305" key="4"/>
<evidence type="ECO:0000305" key="5">
    <source>
    </source>
</evidence>
<evidence type="ECO:0000312" key="6">
    <source>
        <dbReference type="EMBL" id="AME17687.1"/>
    </source>
</evidence>
<name>CX6A_CONIM</name>
<accession>A0A125S9G3</accession>
<feature type="signal peptide" evidence="1">
    <location>
        <begin position="1"/>
        <end position="19"/>
    </location>
</feature>
<feature type="propeptide" id="PRO_0000451009" evidence="4">
    <location>
        <begin position="20"/>
        <end position="47"/>
    </location>
</feature>
<feature type="peptide" id="PRO_5007179698" description="Conotoxin Im6.10">
    <location>
        <begin position="48"/>
        <end position="74"/>
    </location>
</feature>
<feature type="disulfide bond" evidence="4">
    <location>
        <begin position="49"/>
        <end position="58"/>
    </location>
</feature>
<feature type="disulfide bond" evidence="4">
    <location>
        <begin position="52"/>
        <end position="63"/>
    </location>
</feature>
<feature type="disulfide bond" evidence="4">
    <location>
        <begin position="57"/>
        <end position="73"/>
    </location>
</feature>
<sequence length="74" mass="8066">MKTGMIICLLLIAFMDADGSPGDTLYSQKTADTDSGMKRFQKTFQKRRCVFCPKEPCCDGDQCMTAPGTGPFCG</sequence>